<evidence type="ECO:0000255" key="1">
    <source>
        <dbReference type="HAMAP-Rule" id="MF_01217"/>
    </source>
</evidence>
<evidence type="ECO:0000255" key="2">
    <source>
        <dbReference type="PROSITE-ProRule" id="PRU00258"/>
    </source>
</evidence>
<organism>
    <name type="scientific">Xylella fastidiosa (strain Temecula1 / ATCC 700964)</name>
    <dbReference type="NCBI Taxonomy" id="183190"/>
    <lineage>
        <taxon>Bacteria</taxon>
        <taxon>Pseudomonadati</taxon>
        <taxon>Pseudomonadota</taxon>
        <taxon>Gammaproteobacteria</taxon>
        <taxon>Lysobacterales</taxon>
        <taxon>Lysobacteraceae</taxon>
        <taxon>Xylella</taxon>
    </lineage>
</organism>
<reference key="1">
    <citation type="journal article" date="2003" name="J. Bacteriol.">
        <title>Comparative analyses of the complete genome sequences of Pierce's disease and citrus variegated chlorosis strains of Xylella fastidiosa.</title>
        <authorList>
            <person name="Van Sluys M.A."/>
            <person name="de Oliveira M.C."/>
            <person name="Monteiro-Vitorello C.B."/>
            <person name="Miyaki C.Y."/>
            <person name="Furlan L.R."/>
            <person name="Camargo L.E.A."/>
            <person name="da Silva A.C.R."/>
            <person name="Moon D.H."/>
            <person name="Takita M.A."/>
            <person name="Lemos E.G.M."/>
            <person name="Machado M.A."/>
            <person name="Ferro M.I.T."/>
            <person name="da Silva F.R."/>
            <person name="Goldman M.H.S."/>
            <person name="Goldman G.H."/>
            <person name="Lemos M.V.F."/>
            <person name="El-Dorry H."/>
            <person name="Tsai S.M."/>
            <person name="Carrer H."/>
            <person name="Carraro D.M."/>
            <person name="de Oliveira R.C."/>
            <person name="Nunes L.R."/>
            <person name="Siqueira W.J."/>
            <person name="Coutinho L.L."/>
            <person name="Kimura E.T."/>
            <person name="Ferro E.S."/>
            <person name="Harakava R."/>
            <person name="Kuramae E.E."/>
            <person name="Marino C.L."/>
            <person name="Giglioti E."/>
            <person name="Abreu I.L."/>
            <person name="Alves L.M.C."/>
            <person name="do Amaral A.M."/>
            <person name="Baia G.S."/>
            <person name="Blanco S.R."/>
            <person name="Brito M.S."/>
            <person name="Cannavan F.S."/>
            <person name="Celestino A.V."/>
            <person name="da Cunha A.F."/>
            <person name="Fenille R.C."/>
            <person name="Ferro J.A."/>
            <person name="Formighieri E.F."/>
            <person name="Kishi L.T."/>
            <person name="Leoni S.G."/>
            <person name="Oliveira A.R."/>
            <person name="Rosa V.E. Jr."/>
            <person name="Sassaki F.T."/>
            <person name="Sena J.A.D."/>
            <person name="de Souza A.A."/>
            <person name="Truffi D."/>
            <person name="Tsukumo F."/>
            <person name="Yanai G.M."/>
            <person name="Zaros L.G."/>
            <person name="Civerolo E.L."/>
            <person name="Simpson A.J.G."/>
            <person name="Almeida N.F. Jr."/>
            <person name="Setubal J.C."/>
            <person name="Kitajima J.P."/>
        </authorList>
    </citation>
    <scope>NUCLEOTIDE SEQUENCE [LARGE SCALE GENOMIC DNA]</scope>
    <source>
        <strain>Temecula1 / ATCC 700964</strain>
    </source>
</reference>
<sequence>MSDIEARVRKIVAEKLNVDEEKVTNTSTFVDELGADSLDTVELVMALEDEFQCEIGDEAAEKMTSVQHAIDYIKSNAKC</sequence>
<comment type="function">
    <text evidence="1">Carrier of the growing fatty acid chain in fatty acid biosynthesis.</text>
</comment>
<comment type="pathway">
    <text evidence="1">Lipid metabolism; fatty acid biosynthesis.</text>
</comment>
<comment type="subcellular location">
    <subcellularLocation>
        <location evidence="1">Cytoplasm</location>
    </subcellularLocation>
</comment>
<comment type="PTM">
    <text evidence="1">4'-phosphopantetheine is transferred from CoA to a specific serine of apo-ACP by AcpS. This modification is essential for activity because fatty acids are bound in thioester linkage to the sulfhydryl of the prosthetic group.</text>
</comment>
<comment type="similarity">
    <text evidence="1">Belongs to the acyl carrier protein (ACP) family.</text>
</comment>
<proteinExistence type="inferred from homology"/>
<dbReference type="EMBL" id="AE009442">
    <property type="protein sequence ID" value="AAO29345.1"/>
    <property type="molecule type" value="Genomic_DNA"/>
</dbReference>
<dbReference type="RefSeq" id="WP_004083472.1">
    <property type="nucleotide sequence ID" value="NC_004556.1"/>
</dbReference>
<dbReference type="SMR" id="P63449"/>
<dbReference type="GeneID" id="93905324"/>
<dbReference type="KEGG" id="xft:PD_1502"/>
<dbReference type="HOGENOM" id="CLU_108696_5_1_6"/>
<dbReference type="UniPathway" id="UPA00094"/>
<dbReference type="Proteomes" id="UP000002516">
    <property type="component" value="Chromosome"/>
</dbReference>
<dbReference type="GO" id="GO:0005829">
    <property type="term" value="C:cytosol"/>
    <property type="evidence" value="ECO:0007669"/>
    <property type="project" value="TreeGrafter"/>
</dbReference>
<dbReference type="GO" id="GO:0016020">
    <property type="term" value="C:membrane"/>
    <property type="evidence" value="ECO:0007669"/>
    <property type="project" value="GOC"/>
</dbReference>
<dbReference type="GO" id="GO:0000035">
    <property type="term" value="F:acyl binding"/>
    <property type="evidence" value="ECO:0007669"/>
    <property type="project" value="TreeGrafter"/>
</dbReference>
<dbReference type="GO" id="GO:0000036">
    <property type="term" value="F:acyl carrier activity"/>
    <property type="evidence" value="ECO:0007669"/>
    <property type="project" value="UniProtKB-UniRule"/>
</dbReference>
<dbReference type="GO" id="GO:0009245">
    <property type="term" value="P:lipid A biosynthetic process"/>
    <property type="evidence" value="ECO:0007669"/>
    <property type="project" value="TreeGrafter"/>
</dbReference>
<dbReference type="FunFam" id="1.10.1200.10:FF:000001">
    <property type="entry name" value="Acyl carrier protein"/>
    <property type="match status" value="1"/>
</dbReference>
<dbReference type="Gene3D" id="1.10.1200.10">
    <property type="entry name" value="ACP-like"/>
    <property type="match status" value="1"/>
</dbReference>
<dbReference type="HAMAP" id="MF_01217">
    <property type="entry name" value="Acyl_carrier"/>
    <property type="match status" value="1"/>
</dbReference>
<dbReference type="InterPro" id="IPR003231">
    <property type="entry name" value="ACP"/>
</dbReference>
<dbReference type="InterPro" id="IPR036736">
    <property type="entry name" value="ACP-like_sf"/>
</dbReference>
<dbReference type="InterPro" id="IPR009081">
    <property type="entry name" value="PP-bd_ACP"/>
</dbReference>
<dbReference type="InterPro" id="IPR006162">
    <property type="entry name" value="Ppantetheine_attach_site"/>
</dbReference>
<dbReference type="NCBIfam" id="TIGR00517">
    <property type="entry name" value="acyl_carrier"/>
    <property type="match status" value="1"/>
</dbReference>
<dbReference type="NCBIfam" id="NF002148">
    <property type="entry name" value="PRK00982.1-2"/>
    <property type="match status" value="1"/>
</dbReference>
<dbReference type="NCBIfam" id="NF002149">
    <property type="entry name" value="PRK00982.1-3"/>
    <property type="match status" value="1"/>
</dbReference>
<dbReference type="NCBIfam" id="NF002150">
    <property type="entry name" value="PRK00982.1-4"/>
    <property type="match status" value="1"/>
</dbReference>
<dbReference type="NCBIfam" id="NF002151">
    <property type="entry name" value="PRK00982.1-5"/>
    <property type="match status" value="1"/>
</dbReference>
<dbReference type="PANTHER" id="PTHR20863">
    <property type="entry name" value="ACYL CARRIER PROTEIN"/>
    <property type="match status" value="1"/>
</dbReference>
<dbReference type="PANTHER" id="PTHR20863:SF76">
    <property type="entry name" value="CARRIER DOMAIN-CONTAINING PROTEIN"/>
    <property type="match status" value="1"/>
</dbReference>
<dbReference type="Pfam" id="PF00550">
    <property type="entry name" value="PP-binding"/>
    <property type="match status" value="1"/>
</dbReference>
<dbReference type="SUPFAM" id="SSF47336">
    <property type="entry name" value="ACP-like"/>
    <property type="match status" value="1"/>
</dbReference>
<dbReference type="PROSITE" id="PS50075">
    <property type="entry name" value="CARRIER"/>
    <property type="match status" value="1"/>
</dbReference>
<dbReference type="PROSITE" id="PS00012">
    <property type="entry name" value="PHOSPHOPANTETHEINE"/>
    <property type="match status" value="1"/>
</dbReference>
<keyword id="KW-0963">Cytoplasm</keyword>
<keyword id="KW-0275">Fatty acid biosynthesis</keyword>
<keyword id="KW-0276">Fatty acid metabolism</keyword>
<keyword id="KW-0444">Lipid biosynthesis</keyword>
<keyword id="KW-0443">Lipid metabolism</keyword>
<keyword id="KW-0596">Phosphopantetheine</keyword>
<keyword id="KW-0597">Phosphoprotein</keyword>
<keyword id="KW-1185">Reference proteome</keyword>
<protein>
    <recommendedName>
        <fullName evidence="1">Acyl carrier protein</fullName>
        <shortName evidence="1">ACP</shortName>
    </recommendedName>
</protein>
<gene>
    <name evidence="1" type="primary">acpP</name>
    <name type="ordered locus">PD_1502</name>
</gene>
<accession>P63449</accession>
<accession>Q9PFI5</accession>
<feature type="chain" id="PRO_0000180225" description="Acyl carrier protein">
    <location>
        <begin position="1"/>
        <end position="79"/>
    </location>
</feature>
<feature type="domain" description="Carrier" evidence="2">
    <location>
        <begin position="2"/>
        <end position="77"/>
    </location>
</feature>
<feature type="modified residue" description="O-(pantetheine 4'-phosphoryl)serine" evidence="2">
    <location>
        <position position="37"/>
    </location>
</feature>
<name>ACP_XYLFT</name>